<dbReference type="EC" id="4.6.1.19" evidence="4"/>
<dbReference type="EMBL" id="AK018722">
    <property type="protein sequence ID" value="BAB31368.1"/>
    <property type="molecule type" value="mRNA"/>
</dbReference>
<dbReference type="EMBL" id="AK019234">
    <property type="protein sequence ID" value="BAB31616.1"/>
    <property type="molecule type" value="mRNA"/>
</dbReference>
<dbReference type="EMBL" id="BC031496">
    <property type="protein sequence ID" value="AAH31496.1"/>
    <property type="molecule type" value="mRNA"/>
</dbReference>
<dbReference type="CCDS" id="CCDS37433.1"/>
<dbReference type="RefSeq" id="NP_001077407.1">
    <property type="nucleotide sequence ID" value="NM_001083938.3"/>
</dbReference>
<dbReference type="SMR" id="C0HKG5"/>
<dbReference type="FunCoup" id="C0HKG5">
    <property type="interactions" value="604"/>
</dbReference>
<dbReference type="STRING" id="10090.ENSMUSP00000137303"/>
<dbReference type="GlyCosmos" id="C0HKG5">
    <property type="glycosylation" value="3 sites, No reported glycans"/>
</dbReference>
<dbReference type="GlyGen" id="C0HKG5">
    <property type="glycosylation" value="3 sites, 2 N-linked glycans (2 sites)"/>
</dbReference>
<dbReference type="iPTMnet" id="C0HKG5"/>
<dbReference type="PhosphoSitePlus" id="C0HKG5"/>
<dbReference type="jPOST" id="C0HKG5"/>
<dbReference type="PaxDb" id="10090-ENSMUSP00000095031"/>
<dbReference type="Pumba" id="C0HKG5"/>
<dbReference type="DNASU" id="68195"/>
<dbReference type="Ensembl" id="ENSMUST00000089119.13">
    <property type="protein sequence ID" value="ENSMUSP00000086519.6"/>
    <property type="gene ID" value="ENSMUSG00000094724.9"/>
</dbReference>
<dbReference type="Ensembl" id="ENSMUST00000097420.7">
    <property type="protein sequence ID" value="ENSMUSP00000095031.6"/>
    <property type="gene ID" value="ENSMUSG00000095687.3"/>
</dbReference>
<dbReference type="Ensembl" id="ENSMUST00000179728.2">
    <property type="protein sequence ID" value="ENSMUSP00000137303.2"/>
    <property type="gene ID" value="ENSMUSG00000094724.9"/>
</dbReference>
<dbReference type="Ensembl" id="ENSMUST00000231550.2">
    <property type="protein sequence ID" value="ENSMUSP00000156290.2"/>
    <property type="gene ID" value="ENSMUSG00000116876.2"/>
</dbReference>
<dbReference type="Ensembl" id="ENSMUST00000231927.2">
    <property type="protein sequence ID" value="ENSMUSP00000156083.2"/>
    <property type="gene ID" value="ENSMUSG00000095687.3"/>
</dbReference>
<dbReference type="Ensembl" id="ENSMUST00000232307.2">
    <property type="protein sequence ID" value="ENSMUSP00000156372.2"/>
    <property type="gene ID" value="ENSMUSG00000116988.2"/>
</dbReference>
<dbReference type="GeneID" id="100037283"/>
<dbReference type="GeneID" id="68195"/>
<dbReference type="KEGG" id="mmu:100037283"/>
<dbReference type="KEGG" id="mmu:68195"/>
<dbReference type="AGR" id="MGI:1915445"/>
<dbReference type="CTD" id="100037283"/>
<dbReference type="CTD" id="68195"/>
<dbReference type="MGI" id="MGI:1915445">
    <property type="gene designation" value="Rnaset2a"/>
</dbReference>
<dbReference type="VEuPathDB" id="HostDB:ENSMUSG00000094724"/>
<dbReference type="VEuPathDB" id="HostDB:ENSMUSG00000095687"/>
<dbReference type="VEuPathDB" id="HostDB:ENSMUSG00000116876"/>
<dbReference type="VEuPathDB" id="HostDB:ENSMUSG00000116988"/>
<dbReference type="eggNOG" id="KOG1642">
    <property type="taxonomic scope" value="Eukaryota"/>
</dbReference>
<dbReference type="InParanoid" id="C0HKG5"/>
<dbReference type="OMA" id="TNCHIGS"/>
<dbReference type="OrthoDB" id="435754at2759"/>
<dbReference type="BRENDA" id="4.6.1.19">
    <property type="organism ID" value="3474"/>
</dbReference>
<dbReference type="Reactome" id="R-MMU-6798695">
    <property type="pathway name" value="Neutrophil degranulation"/>
</dbReference>
<dbReference type="ChiTaRS" id="Rnaset2a">
    <property type="organism name" value="mouse"/>
</dbReference>
<dbReference type="PRO" id="PR:C0HKG5"/>
<dbReference type="Proteomes" id="UP000000589">
    <property type="component" value="Chromosome 17"/>
</dbReference>
<dbReference type="RNAct" id="C0HKG5">
    <property type="molecule type" value="protein"/>
</dbReference>
<dbReference type="Bgee" id="ENSMUSG00000094724">
    <property type="expression patterns" value="Expressed in right kidney and 112 other cell types or tissues"/>
</dbReference>
<dbReference type="ExpressionAtlas" id="C0HKG5">
    <property type="expression patterns" value="baseline and differential"/>
</dbReference>
<dbReference type="GO" id="GO:0005788">
    <property type="term" value="C:endoplasmic reticulum lumen"/>
    <property type="evidence" value="ECO:0007669"/>
    <property type="project" value="UniProtKB-SubCell"/>
</dbReference>
<dbReference type="GO" id="GO:0005576">
    <property type="term" value="C:extracellular region"/>
    <property type="evidence" value="ECO:0007669"/>
    <property type="project" value="UniProtKB-SubCell"/>
</dbReference>
<dbReference type="GO" id="GO:0043202">
    <property type="term" value="C:lysosomal lumen"/>
    <property type="evidence" value="ECO:0007669"/>
    <property type="project" value="UniProtKB-SubCell"/>
</dbReference>
<dbReference type="GO" id="GO:0005758">
    <property type="term" value="C:mitochondrial intermembrane space"/>
    <property type="evidence" value="ECO:0007669"/>
    <property type="project" value="UniProtKB-SubCell"/>
</dbReference>
<dbReference type="GO" id="GO:0033897">
    <property type="term" value="F:ribonuclease T2 activity"/>
    <property type="evidence" value="ECO:0007669"/>
    <property type="project" value="UniProtKB-EC"/>
</dbReference>
<dbReference type="GO" id="GO:0003723">
    <property type="term" value="F:RNA binding"/>
    <property type="evidence" value="ECO:0007669"/>
    <property type="project" value="InterPro"/>
</dbReference>
<dbReference type="GO" id="GO:0045087">
    <property type="term" value="P:innate immune response"/>
    <property type="evidence" value="ECO:0007669"/>
    <property type="project" value="UniProtKB-KW"/>
</dbReference>
<dbReference type="GO" id="GO:0006401">
    <property type="term" value="P:RNA catabolic process"/>
    <property type="evidence" value="ECO:0007669"/>
    <property type="project" value="UniProtKB-ARBA"/>
</dbReference>
<dbReference type="CDD" id="cd01061">
    <property type="entry name" value="RNase_T2_euk"/>
    <property type="match status" value="1"/>
</dbReference>
<dbReference type="FunFam" id="3.90.730.10:FF:000001">
    <property type="entry name" value="Ribonuclease T2"/>
    <property type="match status" value="1"/>
</dbReference>
<dbReference type="Gene3D" id="3.90.730.10">
    <property type="entry name" value="Ribonuclease T2-like"/>
    <property type="match status" value="1"/>
</dbReference>
<dbReference type="InterPro" id="IPR033697">
    <property type="entry name" value="Ribonuclease_T2_eukaryotic"/>
</dbReference>
<dbReference type="InterPro" id="IPR001568">
    <property type="entry name" value="RNase_T2-like"/>
</dbReference>
<dbReference type="InterPro" id="IPR036430">
    <property type="entry name" value="RNase_T2-like_sf"/>
</dbReference>
<dbReference type="InterPro" id="IPR018188">
    <property type="entry name" value="RNase_T2_His_AS_1"/>
</dbReference>
<dbReference type="InterPro" id="IPR033130">
    <property type="entry name" value="RNase_T2_His_AS_2"/>
</dbReference>
<dbReference type="PANTHER" id="PTHR11240">
    <property type="entry name" value="RIBONUCLEASE T2"/>
    <property type="match status" value="1"/>
</dbReference>
<dbReference type="PANTHER" id="PTHR11240:SF22">
    <property type="entry name" value="RIBONUCLEASE T2"/>
    <property type="match status" value="1"/>
</dbReference>
<dbReference type="Pfam" id="PF00445">
    <property type="entry name" value="Ribonuclease_T2"/>
    <property type="match status" value="1"/>
</dbReference>
<dbReference type="SUPFAM" id="SSF55895">
    <property type="entry name" value="Ribonuclease Rh-like"/>
    <property type="match status" value="1"/>
</dbReference>
<dbReference type="PROSITE" id="PS00530">
    <property type="entry name" value="RNASE_T2_1"/>
    <property type="match status" value="1"/>
</dbReference>
<dbReference type="PROSITE" id="PS00531">
    <property type="entry name" value="RNASE_T2_2"/>
    <property type="match status" value="1"/>
</dbReference>
<sequence length="259" mass="29609">MAPAEARGALPGWISVLGWGLALCSLCGAGPLWSGSHEWKKLILTQHWPPTVCKEVNSCQDSLDYWTIHGLWPDRAEDCNQSWHFNLDEIKDLLRDMKIYWPDVIHRSSNRSQFWKHEWVKHGTCAAQVDALNSEKKYFGKSLDLYKQIDLNSVLQKFGIKPSINYYQLADFKDALTRIYGVVPKIQCLMPEQGESVQTVGQIELCFTKEDLHLRNCTEPGEQLSSRQEAWLAMEASTHGMMVCEDGPIFYPPPTKTQH</sequence>
<name>RNT2A_MOUSE</name>
<protein>
    <recommendedName>
        <fullName evidence="10">Ribonuclease T2-A</fullName>
        <ecNumber evidence="4">4.6.1.19</ecNumber>
    </recommendedName>
    <alternativeName>
        <fullName evidence="6">Ribonuclease 6-A</fullName>
    </alternativeName>
</protein>
<reference key="1">
    <citation type="journal article" date="2005" name="Science">
        <title>The transcriptional landscape of the mammalian genome.</title>
        <authorList>
            <person name="Carninci P."/>
            <person name="Kasukawa T."/>
            <person name="Katayama S."/>
            <person name="Gough J."/>
            <person name="Frith M.C."/>
            <person name="Maeda N."/>
            <person name="Oyama R."/>
            <person name="Ravasi T."/>
            <person name="Lenhard B."/>
            <person name="Wells C."/>
            <person name="Kodzius R."/>
            <person name="Shimokawa K."/>
            <person name="Bajic V.B."/>
            <person name="Brenner S.E."/>
            <person name="Batalov S."/>
            <person name="Forrest A.R."/>
            <person name="Zavolan M."/>
            <person name="Davis M.J."/>
            <person name="Wilming L.G."/>
            <person name="Aidinis V."/>
            <person name="Allen J.E."/>
            <person name="Ambesi-Impiombato A."/>
            <person name="Apweiler R."/>
            <person name="Aturaliya R.N."/>
            <person name="Bailey T.L."/>
            <person name="Bansal M."/>
            <person name="Baxter L."/>
            <person name="Beisel K.W."/>
            <person name="Bersano T."/>
            <person name="Bono H."/>
            <person name="Chalk A.M."/>
            <person name="Chiu K.P."/>
            <person name="Choudhary V."/>
            <person name="Christoffels A."/>
            <person name="Clutterbuck D.R."/>
            <person name="Crowe M.L."/>
            <person name="Dalla E."/>
            <person name="Dalrymple B.P."/>
            <person name="de Bono B."/>
            <person name="Della Gatta G."/>
            <person name="di Bernardo D."/>
            <person name="Down T."/>
            <person name="Engstrom P."/>
            <person name="Fagiolini M."/>
            <person name="Faulkner G."/>
            <person name="Fletcher C.F."/>
            <person name="Fukushima T."/>
            <person name="Furuno M."/>
            <person name="Futaki S."/>
            <person name="Gariboldi M."/>
            <person name="Georgii-Hemming P."/>
            <person name="Gingeras T.R."/>
            <person name="Gojobori T."/>
            <person name="Green R.E."/>
            <person name="Gustincich S."/>
            <person name="Harbers M."/>
            <person name="Hayashi Y."/>
            <person name="Hensch T.K."/>
            <person name="Hirokawa N."/>
            <person name="Hill D."/>
            <person name="Huminiecki L."/>
            <person name="Iacono M."/>
            <person name="Ikeo K."/>
            <person name="Iwama A."/>
            <person name="Ishikawa T."/>
            <person name="Jakt M."/>
            <person name="Kanapin A."/>
            <person name="Katoh M."/>
            <person name="Kawasawa Y."/>
            <person name="Kelso J."/>
            <person name="Kitamura H."/>
            <person name="Kitano H."/>
            <person name="Kollias G."/>
            <person name="Krishnan S.P."/>
            <person name="Kruger A."/>
            <person name="Kummerfeld S.K."/>
            <person name="Kurochkin I.V."/>
            <person name="Lareau L.F."/>
            <person name="Lazarevic D."/>
            <person name="Lipovich L."/>
            <person name="Liu J."/>
            <person name="Liuni S."/>
            <person name="McWilliam S."/>
            <person name="Madan Babu M."/>
            <person name="Madera M."/>
            <person name="Marchionni L."/>
            <person name="Matsuda H."/>
            <person name="Matsuzawa S."/>
            <person name="Miki H."/>
            <person name="Mignone F."/>
            <person name="Miyake S."/>
            <person name="Morris K."/>
            <person name="Mottagui-Tabar S."/>
            <person name="Mulder N."/>
            <person name="Nakano N."/>
            <person name="Nakauchi H."/>
            <person name="Ng P."/>
            <person name="Nilsson R."/>
            <person name="Nishiguchi S."/>
            <person name="Nishikawa S."/>
            <person name="Nori F."/>
            <person name="Ohara O."/>
            <person name="Okazaki Y."/>
            <person name="Orlando V."/>
            <person name="Pang K.C."/>
            <person name="Pavan W.J."/>
            <person name="Pavesi G."/>
            <person name="Pesole G."/>
            <person name="Petrovsky N."/>
            <person name="Piazza S."/>
            <person name="Reed J."/>
            <person name="Reid J.F."/>
            <person name="Ring B.Z."/>
            <person name="Ringwald M."/>
            <person name="Rost B."/>
            <person name="Ruan Y."/>
            <person name="Salzberg S.L."/>
            <person name="Sandelin A."/>
            <person name="Schneider C."/>
            <person name="Schoenbach C."/>
            <person name="Sekiguchi K."/>
            <person name="Semple C.A."/>
            <person name="Seno S."/>
            <person name="Sessa L."/>
            <person name="Sheng Y."/>
            <person name="Shibata Y."/>
            <person name="Shimada H."/>
            <person name="Shimada K."/>
            <person name="Silva D."/>
            <person name="Sinclair B."/>
            <person name="Sperling S."/>
            <person name="Stupka E."/>
            <person name="Sugiura K."/>
            <person name="Sultana R."/>
            <person name="Takenaka Y."/>
            <person name="Taki K."/>
            <person name="Tammoja K."/>
            <person name="Tan S.L."/>
            <person name="Tang S."/>
            <person name="Taylor M.S."/>
            <person name="Tegner J."/>
            <person name="Teichmann S.A."/>
            <person name="Ueda H.R."/>
            <person name="van Nimwegen E."/>
            <person name="Verardo R."/>
            <person name="Wei C.L."/>
            <person name="Yagi K."/>
            <person name="Yamanishi H."/>
            <person name="Zabarovsky E."/>
            <person name="Zhu S."/>
            <person name="Zimmer A."/>
            <person name="Hide W."/>
            <person name="Bult C."/>
            <person name="Grimmond S.M."/>
            <person name="Teasdale R.D."/>
            <person name="Liu E.T."/>
            <person name="Brusic V."/>
            <person name="Quackenbush J."/>
            <person name="Wahlestedt C."/>
            <person name="Mattick J.S."/>
            <person name="Hume D.A."/>
            <person name="Kai C."/>
            <person name="Sasaki D."/>
            <person name="Tomaru Y."/>
            <person name="Fukuda S."/>
            <person name="Kanamori-Katayama M."/>
            <person name="Suzuki M."/>
            <person name="Aoki J."/>
            <person name="Arakawa T."/>
            <person name="Iida J."/>
            <person name="Imamura K."/>
            <person name="Itoh M."/>
            <person name="Kato T."/>
            <person name="Kawaji H."/>
            <person name="Kawagashira N."/>
            <person name="Kawashima T."/>
            <person name="Kojima M."/>
            <person name="Kondo S."/>
            <person name="Konno H."/>
            <person name="Nakano K."/>
            <person name="Ninomiya N."/>
            <person name="Nishio T."/>
            <person name="Okada M."/>
            <person name="Plessy C."/>
            <person name="Shibata K."/>
            <person name="Shiraki T."/>
            <person name="Suzuki S."/>
            <person name="Tagami M."/>
            <person name="Waki K."/>
            <person name="Watahiki A."/>
            <person name="Okamura-Oho Y."/>
            <person name="Suzuki H."/>
            <person name="Kawai J."/>
            <person name="Hayashizaki Y."/>
        </authorList>
    </citation>
    <scope>NUCLEOTIDE SEQUENCE [LARGE SCALE MRNA]</scope>
    <source>
        <strain evidence="8">C57BL/6J</strain>
        <tissue evidence="9">Embryo</tissue>
        <tissue evidence="8">Kidney</tissue>
    </source>
</reference>
<reference key="2">
    <citation type="journal article" date="2004" name="Genome Res.">
        <title>The status, quality, and expansion of the NIH full-length cDNA project: the Mammalian Gene Collection (MGC).</title>
        <authorList>
            <consortium name="The MGC Project Team"/>
        </authorList>
    </citation>
    <scope>NUCLEOTIDE SEQUENCE [LARGE SCALE MRNA]</scope>
    <source>
        <strain evidence="7">FVB/N</strain>
        <tissue evidence="7">Mammary tumor</tissue>
    </source>
</reference>
<reference key="3">
    <citation type="journal article" date="2010" name="Cell">
        <title>A tissue-specific atlas of mouse protein phosphorylation and expression.</title>
        <authorList>
            <person name="Huttlin E.L."/>
            <person name="Jedrychowski M.P."/>
            <person name="Elias J.E."/>
            <person name="Goswami T."/>
            <person name="Rad R."/>
            <person name="Beausoleil S.A."/>
            <person name="Villen J."/>
            <person name="Haas W."/>
            <person name="Sowa M.E."/>
            <person name="Gygi S.P."/>
        </authorList>
    </citation>
    <scope>IDENTIFICATION BY MASS SPECTROMETRY [LARGE SCALE ANALYSIS]</scope>
    <source>
        <tissue>Brain</tissue>
        <tissue>Brown adipose tissue</tissue>
        <tissue>Kidney</tissue>
        <tissue>Liver</tissue>
        <tissue>Lung</tissue>
        <tissue>Spleen</tissue>
        <tissue>Testis</tissue>
    </source>
</reference>
<feature type="signal peptide" evidence="3">
    <location>
        <begin position="1"/>
        <end position="29"/>
    </location>
</feature>
<feature type="chain" id="PRO_0000030988" description="Ribonuclease T2-A">
    <location>
        <begin position="30"/>
        <end position="259"/>
    </location>
</feature>
<feature type="active site" evidence="4">
    <location>
        <position position="69"/>
    </location>
</feature>
<feature type="active site" evidence="2">
    <location>
        <position position="118"/>
    </location>
</feature>
<feature type="active site" evidence="5">
    <location>
        <position position="122"/>
    </location>
</feature>
<feature type="glycosylation site" description="N-linked (GlcNAc...) asparagine" evidence="3">
    <location>
        <position position="80"/>
    </location>
</feature>
<feature type="glycosylation site" description="N-linked (GlcNAc...) asparagine" evidence="3">
    <location>
        <position position="110"/>
    </location>
</feature>
<feature type="glycosylation site" description="N-linked (GlcNAc...) asparagine" evidence="3">
    <location>
        <position position="216"/>
    </location>
</feature>
<feature type="disulfide bond" evidence="1">
    <location>
        <begin position="53"/>
        <end position="59"/>
    </location>
</feature>
<feature type="disulfide bond" evidence="1">
    <location>
        <begin position="79"/>
        <end position="125"/>
    </location>
</feature>
<feature type="disulfide bond" evidence="1">
    <location>
        <begin position="188"/>
        <end position="244"/>
    </location>
</feature>
<feature type="disulfide bond" evidence="1">
    <location>
        <begin position="206"/>
        <end position="217"/>
    </location>
</feature>
<gene>
    <name type="primary">Rnaset2a</name>
    <name evidence="10" type="synonym">Rnase6pl</name>
</gene>
<keyword id="KW-1015">Disulfide bond</keyword>
<keyword id="KW-0255">Endonuclease</keyword>
<keyword id="KW-0256">Endoplasmic reticulum</keyword>
<keyword id="KW-0325">Glycoprotein</keyword>
<keyword id="KW-0378">Hydrolase</keyword>
<keyword id="KW-0391">Immunity</keyword>
<keyword id="KW-0399">Innate immunity</keyword>
<keyword id="KW-0456">Lyase</keyword>
<keyword id="KW-0458">Lysosome</keyword>
<keyword id="KW-0496">Mitochondrion</keyword>
<keyword id="KW-0540">Nuclease</keyword>
<keyword id="KW-1185">Reference proteome</keyword>
<keyword id="KW-0964">Secreted</keyword>
<keyword id="KW-0732">Signal</keyword>
<comment type="function">
    <text evidence="1">Ribonuclease that plays an essential role in innate immune response by recognizing and degrading RNAs from microbial pathogens that are subsequently sensed by TLR8. Cleaves preferentially single-stranded RNA molecules between purine and uridine residues, which critically contributes to the supply of catabolic uridine and the generation of purine-2',3'-cyclophosphate-terminated oligoribonucleotides. In turn, RNase T2 degradation products promote the RNA-dependent activation of TLR8. In plasmacytoid dendritic cells, it cooperates with PLD3 or PLD4 5'-&gt;3' exonucleases to process RNA fragments and release 2',3'-cyclic guanosine monophosphate (2',3'-cGMP), a potent stimulatory ligand for TLR7. Also plays a key role in degradation of mitochondrial RNA and processing of non-coding RNA imported from the cytosol into mitochondria. Participates as well in degradation of mitochondrion-associated cytosolic rRNAs.</text>
</comment>
<comment type="catalytic activity">
    <reaction evidence="4">
        <text>a ribonucleotidyl-ribonucleotide-RNA + H2O = a 3'-end 3'-phospho-ribonucleotide-RNA + a 5'-end dephospho-ribonucleoside-RNA + H(+)</text>
        <dbReference type="Rhea" id="RHEA:68052"/>
        <dbReference type="Rhea" id="RHEA-COMP:10463"/>
        <dbReference type="Rhea" id="RHEA-COMP:13936"/>
        <dbReference type="Rhea" id="RHEA-COMP:17355"/>
        <dbReference type="ChEBI" id="CHEBI:15377"/>
        <dbReference type="ChEBI" id="CHEBI:15378"/>
        <dbReference type="ChEBI" id="CHEBI:83062"/>
        <dbReference type="ChEBI" id="CHEBI:138284"/>
        <dbReference type="ChEBI" id="CHEBI:173118"/>
        <dbReference type="EC" id="4.6.1.19"/>
    </reaction>
</comment>
<comment type="catalytic activity">
    <reaction evidence="1">
        <text>an adenylyl-uridine-RNA = a 3'-end 2',3'-cyclophospho-AMP-RNA + a 5'-end dephospho-uridine-RNA</text>
        <dbReference type="Rhea" id="RHEA:81383"/>
        <dbReference type="Rhea" id="RHEA-COMP:17356"/>
        <dbReference type="Rhea" id="RHEA-COMP:19675"/>
        <dbReference type="Rhea" id="RHEA-COMP:19676"/>
        <dbReference type="ChEBI" id="CHEBI:173224"/>
        <dbReference type="ChEBI" id="CHEBI:231879"/>
        <dbReference type="ChEBI" id="CHEBI:231881"/>
    </reaction>
    <physiologicalReaction direction="left-to-right" evidence="1">
        <dbReference type="Rhea" id="RHEA:81384"/>
    </physiologicalReaction>
</comment>
<comment type="catalytic activity">
    <reaction evidence="1">
        <text>a guanylyl-uridine-RNA = a 3'-end 2',3'-cyclophospho-GMP-RNA + a 5'-end dephospho-uridine-RNA</text>
        <dbReference type="Rhea" id="RHEA:81323"/>
        <dbReference type="Rhea" id="RHEA-COMP:17356"/>
        <dbReference type="Rhea" id="RHEA-COMP:19658"/>
        <dbReference type="Rhea" id="RHEA-COMP:19659"/>
        <dbReference type="ChEBI" id="CHEBI:173224"/>
        <dbReference type="ChEBI" id="CHEBI:231849"/>
        <dbReference type="ChEBI" id="CHEBI:231850"/>
    </reaction>
</comment>
<comment type="activity regulation">
    <text evidence="1">Inhibited by Zn(2+) and Cu(2+).</text>
</comment>
<comment type="subcellular location">
    <subcellularLocation>
        <location evidence="1">Secreted</location>
    </subcellularLocation>
    <subcellularLocation>
        <location evidence="1">Lysosome lumen</location>
    </subcellularLocation>
    <subcellularLocation>
        <location evidence="1">Endoplasmic reticulum lumen</location>
    </subcellularLocation>
    <subcellularLocation>
        <location evidence="1">Mitochondrion intermembrane space</location>
    </subcellularLocation>
</comment>
<comment type="similarity">
    <text evidence="6">Belongs to the RNase T2 family.</text>
</comment>
<organism>
    <name type="scientific">Mus musculus</name>
    <name type="common">Mouse</name>
    <dbReference type="NCBI Taxonomy" id="10090"/>
    <lineage>
        <taxon>Eukaryota</taxon>
        <taxon>Metazoa</taxon>
        <taxon>Chordata</taxon>
        <taxon>Craniata</taxon>
        <taxon>Vertebrata</taxon>
        <taxon>Euteleostomi</taxon>
        <taxon>Mammalia</taxon>
        <taxon>Eutheria</taxon>
        <taxon>Euarchontoglires</taxon>
        <taxon>Glires</taxon>
        <taxon>Rodentia</taxon>
        <taxon>Myomorpha</taxon>
        <taxon>Muroidea</taxon>
        <taxon>Muridae</taxon>
        <taxon>Murinae</taxon>
        <taxon>Mus</taxon>
        <taxon>Mus</taxon>
    </lineage>
</organism>
<proteinExistence type="evidence at protein level"/>
<accession>C0HKG5</accession>
<accession>Q9CQ01</accession>
<evidence type="ECO:0000250" key="1">
    <source>
        <dbReference type="UniProtKB" id="O00584"/>
    </source>
</evidence>
<evidence type="ECO:0000250" key="2">
    <source>
        <dbReference type="UniProtKB" id="P08056"/>
    </source>
</evidence>
<evidence type="ECO:0000255" key="3"/>
<evidence type="ECO:0000255" key="4">
    <source>
        <dbReference type="PROSITE-ProRule" id="PRU10045"/>
    </source>
</evidence>
<evidence type="ECO:0000255" key="5">
    <source>
        <dbReference type="PROSITE-ProRule" id="PRU10046"/>
    </source>
</evidence>
<evidence type="ECO:0000305" key="6"/>
<evidence type="ECO:0000312" key="7">
    <source>
        <dbReference type="EMBL" id="AAH31496.1"/>
    </source>
</evidence>
<evidence type="ECO:0000312" key="8">
    <source>
        <dbReference type="EMBL" id="BAB31368.1"/>
    </source>
</evidence>
<evidence type="ECO:0000312" key="9">
    <source>
        <dbReference type="EMBL" id="BAB31616.1"/>
    </source>
</evidence>
<evidence type="ECO:0000312" key="10">
    <source>
        <dbReference type="MGI" id="MGI:1915445"/>
    </source>
</evidence>